<name>BBSE_THAAR</name>
<reference key="1">
    <citation type="journal article" date="2000" name="J. Bacteriol.">
        <title>Anaerobic toluene catabolism of Thauera aromatica: the bbs operon codes for enzymes of beta-oxidation of the intermediate benzylsuccinate.</title>
        <authorList>
            <person name="Leuthner B."/>
            <person name="Heider J."/>
        </authorList>
    </citation>
    <scope>NUCLEOTIDE SEQUENCE [GENOMIC DNA]</scope>
    <scope>PROTEIN SEQUENCE OF 2-20</scope>
    <scope>PATHWAY</scope>
    <scope>INDUCTION</scope>
    <scope>GENE NAME</scope>
    <source>
        <strain>DSM 6984 / CIP 107765 / K172</strain>
    </source>
</reference>
<reference key="2">
    <citation type="journal article" date="2001" name="J. Bacteriol.">
        <title>Succinyl-CoA:(R)-benzylsuccinate CoA-transferase: an enzyme of the anaerobic toluene catabolic pathway in denitrifying bacteria.</title>
        <authorList>
            <person name="Leutwein C."/>
            <person name="Heider J."/>
        </authorList>
    </citation>
    <scope>FUNCTION</scope>
    <scope>CATALYTIC ACTIVITY</scope>
    <scope>ACTIVITY REGULATION</scope>
    <scope>BIOPHYSICOCHEMICAL PROPERTIES</scope>
    <scope>PATHWAY</scope>
    <scope>SUBUNIT</scope>
    <source>
        <strain>DSM 6984 / CIP 107765 / K172</strain>
    </source>
</reference>
<comment type="function">
    <text evidence="2">Catalyzes the reversible conversion of (R)-2-benzylsuccinate to (R)-2-benzylsuccinyl-CoA. Inactive with (S)-benzylsuccinate.</text>
</comment>
<comment type="catalytic activity">
    <reaction evidence="2">
        <text>(R)-2-benzylsuccinate + succinyl-CoA = (R)-2-benzylsuccinyl-CoA + succinate</text>
        <dbReference type="Rhea" id="RHEA:16469"/>
        <dbReference type="ChEBI" id="CHEBI:30031"/>
        <dbReference type="ChEBI" id="CHEBI:57253"/>
        <dbReference type="ChEBI" id="CHEBI:57292"/>
        <dbReference type="ChEBI" id="CHEBI:58692"/>
        <dbReference type="EC" id="2.8.3.15"/>
    </reaction>
</comment>
<comment type="activity regulation">
    <text evidence="2">Inhibited by (S)-benzylsuccinyl-CoA.</text>
</comment>
<comment type="biophysicochemical properties">
    <kinetics>
        <KM evidence="2">40 uM for (R)-2-benzylsuccinyl-CoA</KM>
        <KM evidence="2">160 uM for succinate</KM>
    </kinetics>
</comment>
<comment type="pathway">
    <text evidence="1 2">Xenobiotic degradation; toluene degradation.</text>
</comment>
<comment type="subunit">
    <text evidence="2">Heterotetramer composed of 2 BbsE subunits and 2 BbsF subunits.</text>
</comment>
<comment type="induction">
    <text evidence="1">Induced by toluene.</text>
</comment>
<comment type="similarity">
    <text evidence="3">Belongs to the CoA-transferase III family.</text>
</comment>
<protein>
    <recommendedName>
        <fullName>Succinyl-CoA:(R)-benzylsuccinate CoA-transferase subunit BbsE</fullName>
        <ecNumber>2.8.3.15</ecNumber>
    </recommendedName>
</protein>
<proteinExistence type="evidence at protein level"/>
<evidence type="ECO:0000269" key="1">
    <source>
    </source>
</evidence>
<evidence type="ECO:0000269" key="2">
    <source>
    </source>
</evidence>
<evidence type="ECO:0000305" key="3"/>
<feature type="initiator methionine" description="Removed" evidence="1">
    <location>
        <position position="1"/>
    </location>
</feature>
<feature type="chain" id="PRO_0000418886" description="Succinyl-CoA:(R)-benzylsuccinate CoA-transferase subunit BbsE">
    <location>
        <begin position="2"/>
        <end position="410"/>
    </location>
</feature>
<dbReference type="EC" id="2.8.3.15"/>
<dbReference type="EMBL" id="AF173961">
    <property type="protein sequence ID" value="AAF89840.1"/>
    <property type="molecule type" value="Genomic_DNA"/>
</dbReference>
<dbReference type="SMR" id="Q9KJF0"/>
<dbReference type="KEGG" id="ag:AAF89840"/>
<dbReference type="BioCyc" id="MetaCyc:MONOMER-685"/>
<dbReference type="SABIO-RK" id="Q9KJF0"/>
<dbReference type="UniPathway" id="UPA00273"/>
<dbReference type="GO" id="GO:0033877">
    <property type="term" value="F:succinyl-CoA:(R)-benzylsuccinate CoA-transferase activity"/>
    <property type="evidence" value="ECO:0007669"/>
    <property type="project" value="UniProtKB-EC"/>
</dbReference>
<dbReference type="GO" id="GO:0042203">
    <property type="term" value="P:toluene catabolic process"/>
    <property type="evidence" value="ECO:0007669"/>
    <property type="project" value="UniProtKB-UniPathway"/>
</dbReference>
<dbReference type="Gene3D" id="3.40.50.10540">
    <property type="entry name" value="Crotonobetainyl-coa:carnitine coa-transferase, domain 1"/>
    <property type="match status" value="1"/>
</dbReference>
<dbReference type="Gene3D" id="3.30.1540.10">
    <property type="entry name" value="formyl-coa transferase, domain 3"/>
    <property type="match status" value="1"/>
</dbReference>
<dbReference type="InterPro" id="IPR050483">
    <property type="entry name" value="CoA-transferase_III_domain"/>
</dbReference>
<dbReference type="InterPro" id="IPR003673">
    <property type="entry name" value="CoA-Trfase_fam_III"/>
</dbReference>
<dbReference type="InterPro" id="IPR044855">
    <property type="entry name" value="CoA-Trfase_III_dom3_sf"/>
</dbReference>
<dbReference type="InterPro" id="IPR023606">
    <property type="entry name" value="CoA-Trfase_III_dom_1_sf"/>
</dbReference>
<dbReference type="PANTHER" id="PTHR48207:SF4">
    <property type="entry name" value="BLL6097 PROTEIN"/>
    <property type="match status" value="1"/>
</dbReference>
<dbReference type="PANTHER" id="PTHR48207">
    <property type="entry name" value="SUCCINATE--HYDROXYMETHYLGLUTARATE COA-TRANSFERASE"/>
    <property type="match status" value="1"/>
</dbReference>
<dbReference type="Pfam" id="PF02515">
    <property type="entry name" value="CoA_transf_3"/>
    <property type="match status" value="1"/>
</dbReference>
<dbReference type="SUPFAM" id="SSF89796">
    <property type="entry name" value="CoA-transferase family III (CaiB/BaiF)"/>
    <property type="match status" value="1"/>
</dbReference>
<keyword id="KW-0058">Aromatic hydrocarbons catabolism</keyword>
<keyword id="KW-0903">Direct protein sequencing</keyword>
<keyword id="KW-0808">Transferase</keyword>
<gene>
    <name type="primary">bbsE</name>
</gene>
<sequence>MGQDFSRFRVVDMTGELGPYTAKMFAGLGADVIHVESPAGDPLRRVGPWFRNQPGVQASLPYLYYNAGKRGFAVDLEHEAGREVFRTLCSGADLLVESCRPGYLDGLGLSYEELSRDNARLVQTSVTPFGRTGPLAAYPGSDLTCSALSGFLWLAGIDGDKPVRAPDNQAYRMAEAYAAVGSAIALFSAQRTGKGQLVDVACIEAEAMALENAAQFWDLEGKIRRGRGREAGSATLHPCADGYIALVAIMGRNKDMWTPFVRWMEAEGVEEWPLFDDDKWIDYAYRTSEEGYTTFCRVFERYTRSRSKAELYEIGQRFNVAVTPVSDGRDLLANPQLAHREFWQTQFNDTLGADITYPGAPYEFGELQWQLGRNAPRIGEHTREILVECGYPAFEIDNLLRMGAVYAEQH</sequence>
<organism>
    <name type="scientific">Thauera aromatica</name>
    <dbReference type="NCBI Taxonomy" id="59405"/>
    <lineage>
        <taxon>Bacteria</taxon>
        <taxon>Pseudomonadati</taxon>
        <taxon>Pseudomonadota</taxon>
        <taxon>Betaproteobacteria</taxon>
        <taxon>Rhodocyclales</taxon>
        <taxon>Zoogloeaceae</taxon>
        <taxon>Thauera</taxon>
    </lineage>
</organism>
<accession>Q9KJF0</accession>